<dbReference type="EC" id="2.7.4.9" evidence="1"/>
<dbReference type="EMBL" id="AL935263">
    <property type="protein sequence ID" value="CCC78177.1"/>
    <property type="molecule type" value="Genomic_DNA"/>
</dbReference>
<dbReference type="RefSeq" id="WP_011101140.1">
    <property type="nucleotide sequence ID" value="NC_004567.2"/>
</dbReference>
<dbReference type="RefSeq" id="YP_004888691.1">
    <property type="nucleotide sequence ID" value="NC_004567.2"/>
</dbReference>
<dbReference type="SMR" id="Q88YP6"/>
<dbReference type="STRING" id="220668.lp_0703"/>
<dbReference type="EnsemblBacteria" id="CCC78177">
    <property type="protein sequence ID" value="CCC78177"/>
    <property type="gene ID" value="lp_0703"/>
</dbReference>
<dbReference type="GeneID" id="89668278"/>
<dbReference type="KEGG" id="lpl:lp_0703"/>
<dbReference type="PATRIC" id="fig|220668.9.peg.590"/>
<dbReference type="eggNOG" id="COG0125">
    <property type="taxonomic scope" value="Bacteria"/>
</dbReference>
<dbReference type="HOGENOM" id="CLU_049131_0_2_9"/>
<dbReference type="OrthoDB" id="9774907at2"/>
<dbReference type="PhylomeDB" id="Q88YP6"/>
<dbReference type="Proteomes" id="UP000000432">
    <property type="component" value="Chromosome"/>
</dbReference>
<dbReference type="GO" id="GO:0005829">
    <property type="term" value="C:cytosol"/>
    <property type="evidence" value="ECO:0007669"/>
    <property type="project" value="TreeGrafter"/>
</dbReference>
<dbReference type="GO" id="GO:0005524">
    <property type="term" value="F:ATP binding"/>
    <property type="evidence" value="ECO:0007669"/>
    <property type="project" value="UniProtKB-UniRule"/>
</dbReference>
<dbReference type="GO" id="GO:0004798">
    <property type="term" value="F:dTMP kinase activity"/>
    <property type="evidence" value="ECO:0007669"/>
    <property type="project" value="UniProtKB-UniRule"/>
</dbReference>
<dbReference type="GO" id="GO:0006233">
    <property type="term" value="P:dTDP biosynthetic process"/>
    <property type="evidence" value="ECO:0007669"/>
    <property type="project" value="InterPro"/>
</dbReference>
<dbReference type="GO" id="GO:0006235">
    <property type="term" value="P:dTTP biosynthetic process"/>
    <property type="evidence" value="ECO:0007669"/>
    <property type="project" value="UniProtKB-UniRule"/>
</dbReference>
<dbReference type="GO" id="GO:0006227">
    <property type="term" value="P:dUDP biosynthetic process"/>
    <property type="evidence" value="ECO:0007669"/>
    <property type="project" value="TreeGrafter"/>
</dbReference>
<dbReference type="CDD" id="cd01672">
    <property type="entry name" value="TMPK"/>
    <property type="match status" value="1"/>
</dbReference>
<dbReference type="FunFam" id="3.40.50.300:FF:000225">
    <property type="entry name" value="Thymidylate kinase"/>
    <property type="match status" value="1"/>
</dbReference>
<dbReference type="Gene3D" id="3.40.50.300">
    <property type="entry name" value="P-loop containing nucleotide triphosphate hydrolases"/>
    <property type="match status" value="1"/>
</dbReference>
<dbReference type="HAMAP" id="MF_00165">
    <property type="entry name" value="Thymidylate_kinase"/>
    <property type="match status" value="1"/>
</dbReference>
<dbReference type="InterPro" id="IPR027417">
    <property type="entry name" value="P-loop_NTPase"/>
</dbReference>
<dbReference type="InterPro" id="IPR039430">
    <property type="entry name" value="Thymidylate_kin-like_dom"/>
</dbReference>
<dbReference type="InterPro" id="IPR018095">
    <property type="entry name" value="Thymidylate_kin_CS"/>
</dbReference>
<dbReference type="InterPro" id="IPR018094">
    <property type="entry name" value="Thymidylate_kinase"/>
</dbReference>
<dbReference type="NCBIfam" id="TIGR00041">
    <property type="entry name" value="DTMP_kinase"/>
    <property type="match status" value="1"/>
</dbReference>
<dbReference type="PANTHER" id="PTHR10344">
    <property type="entry name" value="THYMIDYLATE KINASE"/>
    <property type="match status" value="1"/>
</dbReference>
<dbReference type="PANTHER" id="PTHR10344:SF4">
    <property type="entry name" value="UMP-CMP KINASE 2, MITOCHONDRIAL"/>
    <property type="match status" value="1"/>
</dbReference>
<dbReference type="Pfam" id="PF02223">
    <property type="entry name" value="Thymidylate_kin"/>
    <property type="match status" value="1"/>
</dbReference>
<dbReference type="SUPFAM" id="SSF52540">
    <property type="entry name" value="P-loop containing nucleoside triphosphate hydrolases"/>
    <property type="match status" value="1"/>
</dbReference>
<dbReference type="PROSITE" id="PS01331">
    <property type="entry name" value="THYMIDYLATE_KINASE"/>
    <property type="match status" value="1"/>
</dbReference>
<reference key="1">
    <citation type="journal article" date="2003" name="Proc. Natl. Acad. Sci. U.S.A.">
        <title>Complete genome sequence of Lactobacillus plantarum WCFS1.</title>
        <authorList>
            <person name="Kleerebezem M."/>
            <person name="Boekhorst J."/>
            <person name="van Kranenburg R."/>
            <person name="Molenaar D."/>
            <person name="Kuipers O.P."/>
            <person name="Leer R."/>
            <person name="Tarchini R."/>
            <person name="Peters S.A."/>
            <person name="Sandbrink H.M."/>
            <person name="Fiers M.W.E.J."/>
            <person name="Stiekema W."/>
            <person name="Klein Lankhorst R.M."/>
            <person name="Bron P.A."/>
            <person name="Hoffer S.M."/>
            <person name="Nierop Groot M.N."/>
            <person name="Kerkhoven R."/>
            <person name="De Vries M."/>
            <person name="Ursing B."/>
            <person name="De Vos W.M."/>
            <person name="Siezen R.J."/>
        </authorList>
    </citation>
    <scope>NUCLEOTIDE SEQUENCE [LARGE SCALE GENOMIC DNA]</scope>
    <source>
        <strain>ATCC BAA-793 / NCIMB 8826 / WCFS1</strain>
    </source>
</reference>
<reference key="2">
    <citation type="journal article" date="2012" name="J. Bacteriol.">
        <title>Complete resequencing and reannotation of the Lactobacillus plantarum WCFS1 genome.</title>
        <authorList>
            <person name="Siezen R.J."/>
            <person name="Francke C."/>
            <person name="Renckens B."/>
            <person name="Boekhorst J."/>
            <person name="Wels M."/>
            <person name="Kleerebezem M."/>
            <person name="van Hijum S.A."/>
        </authorList>
    </citation>
    <scope>NUCLEOTIDE SEQUENCE [LARGE SCALE GENOMIC DNA]</scope>
    <scope>GENOME REANNOTATION</scope>
    <source>
        <strain>ATCC BAA-793 / NCIMB 8826 / WCFS1</strain>
    </source>
</reference>
<feature type="chain" id="PRO_0000155289" description="Thymidylate kinase">
    <location>
        <begin position="1"/>
        <end position="221"/>
    </location>
</feature>
<feature type="binding site" evidence="1">
    <location>
        <begin position="11"/>
        <end position="18"/>
    </location>
    <ligand>
        <name>ATP</name>
        <dbReference type="ChEBI" id="CHEBI:30616"/>
    </ligand>
</feature>
<organism>
    <name type="scientific">Lactiplantibacillus plantarum (strain ATCC BAA-793 / NCIMB 8826 / WCFS1)</name>
    <name type="common">Lactobacillus plantarum</name>
    <dbReference type="NCBI Taxonomy" id="220668"/>
    <lineage>
        <taxon>Bacteria</taxon>
        <taxon>Bacillati</taxon>
        <taxon>Bacillota</taxon>
        <taxon>Bacilli</taxon>
        <taxon>Lactobacillales</taxon>
        <taxon>Lactobacillaceae</taxon>
        <taxon>Lactiplantibacillus</taxon>
    </lineage>
</organism>
<evidence type="ECO:0000255" key="1">
    <source>
        <dbReference type="HAMAP-Rule" id="MF_00165"/>
    </source>
</evidence>
<comment type="function">
    <text evidence="1">Phosphorylation of dTMP to form dTDP in both de novo and salvage pathways of dTTP synthesis.</text>
</comment>
<comment type="catalytic activity">
    <reaction evidence="1">
        <text>dTMP + ATP = dTDP + ADP</text>
        <dbReference type="Rhea" id="RHEA:13517"/>
        <dbReference type="ChEBI" id="CHEBI:30616"/>
        <dbReference type="ChEBI" id="CHEBI:58369"/>
        <dbReference type="ChEBI" id="CHEBI:63528"/>
        <dbReference type="ChEBI" id="CHEBI:456216"/>
        <dbReference type="EC" id="2.7.4.9"/>
    </reaction>
</comment>
<comment type="similarity">
    <text evidence="1">Belongs to the thymidylate kinase family.</text>
</comment>
<name>KTHY_LACPL</name>
<accession>Q88YP6</accession>
<accession>F9ULT8</accession>
<sequence>MLTGKLVTFEGPDGAGKTSALNAIVAKLQPQLGDRLVVTREPGGNQISEAIRKIILDRHNTAMDDRTEALLYAAARRQHIVQTIQPALQNDQLVLCDRYIDSSVAYQGAGRGIGEQAVYDMNQFATAGLTADLTLYFDVDAAVGLNRIQQHRQNEINRLDVEALSFHHRVQAAYLRLLADHPDRIKRVDASQPLDQVVTQALEIMASQLPTYVASKGGEDQ</sequence>
<protein>
    <recommendedName>
        <fullName evidence="1">Thymidylate kinase</fullName>
        <ecNumber evidence="1">2.7.4.9</ecNumber>
    </recommendedName>
    <alternativeName>
        <fullName evidence="1">dTMP kinase</fullName>
    </alternativeName>
</protein>
<gene>
    <name evidence="1" type="primary">tmk</name>
    <name type="ordered locus">lp_0703</name>
</gene>
<keyword id="KW-0067">ATP-binding</keyword>
<keyword id="KW-0418">Kinase</keyword>
<keyword id="KW-0545">Nucleotide biosynthesis</keyword>
<keyword id="KW-0547">Nucleotide-binding</keyword>
<keyword id="KW-1185">Reference proteome</keyword>
<keyword id="KW-0808">Transferase</keyword>
<proteinExistence type="inferred from homology"/>